<reference key="1">
    <citation type="journal article" date="1997" name="Genomics">
        <title>Genomic structure of a novel chloride channel gene, CLIC2, in Xq28.</title>
        <authorList>
            <person name="Heiss N.S."/>
            <person name="Poustka A."/>
        </authorList>
    </citation>
    <scope>NUCLEOTIDE SEQUENCE [GENOMIC DNA / MRNA]</scope>
</reference>
<reference key="2">
    <citation type="journal article" date="2004" name="Nat. Genet.">
        <title>Complete sequencing and characterization of 21,243 full-length human cDNAs.</title>
        <authorList>
            <person name="Ota T."/>
            <person name="Suzuki Y."/>
            <person name="Nishikawa T."/>
            <person name="Otsuki T."/>
            <person name="Sugiyama T."/>
            <person name="Irie R."/>
            <person name="Wakamatsu A."/>
            <person name="Hayashi K."/>
            <person name="Sato H."/>
            <person name="Nagai K."/>
            <person name="Kimura K."/>
            <person name="Makita H."/>
            <person name="Sekine M."/>
            <person name="Obayashi M."/>
            <person name="Nishi T."/>
            <person name="Shibahara T."/>
            <person name="Tanaka T."/>
            <person name="Ishii S."/>
            <person name="Yamamoto J."/>
            <person name="Saito K."/>
            <person name="Kawai Y."/>
            <person name="Isono Y."/>
            <person name="Nakamura Y."/>
            <person name="Nagahari K."/>
            <person name="Murakami K."/>
            <person name="Yasuda T."/>
            <person name="Iwayanagi T."/>
            <person name="Wagatsuma M."/>
            <person name="Shiratori A."/>
            <person name="Sudo H."/>
            <person name="Hosoiri T."/>
            <person name="Kaku Y."/>
            <person name="Kodaira H."/>
            <person name="Kondo H."/>
            <person name="Sugawara M."/>
            <person name="Takahashi M."/>
            <person name="Kanda K."/>
            <person name="Yokoi T."/>
            <person name="Furuya T."/>
            <person name="Kikkawa E."/>
            <person name="Omura Y."/>
            <person name="Abe K."/>
            <person name="Kamihara K."/>
            <person name="Katsuta N."/>
            <person name="Sato K."/>
            <person name="Tanikawa M."/>
            <person name="Yamazaki M."/>
            <person name="Ninomiya K."/>
            <person name="Ishibashi T."/>
            <person name="Yamashita H."/>
            <person name="Murakawa K."/>
            <person name="Fujimori K."/>
            <person name="Tanai H."/>
            <person name="Kimata M."/>
            <person name="Watanabe M."/>
            <person name="Hiraoka S."/>
            <person name="Chiba Y."/>
            <person name="Ishida S."/>
            <person name="Ono Y."/>
            <person name="Takiguchi S."/>
            <person name="Watanabe S."/>
            <person name="Yosida M."/>
            <person name="Hotuta T."/>
            <person name="Kusano J."/>
            <person name="Kanehori K."/>
            <person name="Takahashi-Fujii A."/>
            <person name="Hara H."/>
            <person name="Tanase T.-O."/>
            <person name="Nomura Y."/>
            <person name="Togiya S."/>
            <person name="Komai F."/>
            <person name="Hara R."/>
            <person name="Takeuchi K."/>
            <person name="Arita M."/>
            <person name="Imose N."/>
            <person name="Musashino K."/>
            <person name="Yuuki H."/>
            <person name="Oshima A."/>
            <person name="Sasaki N."/>
            <person name="Aotsuka S."/>
            <person name="Yoshikawa Y."/>
            <person name="Matsunawa H."/>
            <person name="Ichihara T."/>
            <person name="Shiohata N."/>
            <person name="Sano S."/>
            <person name="Moriya S."/>
            <person name="Momiyama H."/>
            <person name="Satoh N."/>
            <person name="Takami S."/>
            <person name="Terashima Y."/>
            <person name="Suzuki O."/>
            <person name="Nakagawa S."/>
            <person name="Senoh A."/>
            <person name="Mizoguchi H."/>
            <person name="Goto Y."/>
            <person name="Shimizu F."/>
            <person name="Wakebe H."/>
            <person name="Hishigaki H."/>
            <person name="Watanabe T."/>
            <person name="Sugiyama A."/>
            <person name="Takemoto M."/>
            <person name="Kawakami B."/>
            <person name="Yamazaki M."/>
            <person name="Watanabe K."/>
            <person name="Kumagai A."/>
            <person name="Itakura S."/>
            <person name="Fukuzumi Y."/>
            <person name="Fujimori Y."/>
            <person name="Komiyama M."/>
            <person name="Tashiro H."/>
            <person name="Tanigami A."/>
            <person name="Fujiwara T."/>
            <person name="Ono T."/>
            <person name="Yamada K."/>
            <person name="Fujii Y."/>
            <person name="Ozaki K."/>
            <person name="Hirao M."/>
            <person name="Ohmori Y."/>
            <person name="Kawabata A."/>
            <person name="Hikiji T."/>
            <person name="Kobatake N."/>
            <person name="Inagaki H."/>
            <person name="Ikema Y."/>
            <person name="Okamoto S."/>
            <person name="Okitani R."/>
            <person name="Kawakami T."/>
            <person name="Noguchi S."/>
            <person name="Itoh T."/>
            <person name="Shigeta K."/>
            <person name="Senba T."/>
            <person name="Matsumura K."/>
            <person name="Nakajima Y."/>
            <person name="Mizuno T."/>
            <person name="Morinaga M."/>
            <person name="Sasaki M."/>
            <person name="Togashi T."/>
            <person name="Oyama M."/>
            <person name="Hata H."/>
            <person name="Watanabe M."/>
            <person name="Komatsu T."/>
            <person name="Mizushima-Sugano J."/>
            <person name="Satoh T."/>
            <person name="Shirai Y."/>
            <person name="Takahashi Y."/>
            <person name="Nakagawa K."/>
            <person name="Okumura K."/>
            <person name="Nagase T."/>
            <person name="Nomura N."/>
            <person name="Kikuchi H."/>
            <person name="Masuho Y."/>
            <person name="Yamashita R."/>
            <person name="Nakai K."/>
            <person name="Yada T."/>
            <person name="Nakamura Y."/>
            <person name="Ohara O."/>
            <person name="Isogai T."/>
            <person name="Sugano S."/>
        </authorList>
    </citation>
    <scope>NUCLEOTIDE SEQUENCE [LARGE SCALE MRNA]</scope>
    <source>
        <tissue>Trachea</tissue>
    </source>
</reference>
<reference key="3">
    <citation type="journal article" date="2005" name="Nature">
        <title>The DNA sequence of the human X chromosome.</title>
        <authorList>
            <person name="Ross M.T."/>
            <person name="Grafham D.V."/>
            <person name="Coffey A.J."/>
            <person name="Scherer S."/>
            <person name="McLay K."/>
            <person name="Muzny D."/>
            <person name="Platzer M."/>
            <person name="Howell G.R."/>
            <person name="Burrows C."/>
            <person name="Bird C.P."/>
            <person name="Frankish A."/>
            <person name="Lovell F.L."/>
            <person name="Howe K.L."/>
            <person name="Ashurst J.L."/>
            <person name="Fulton R.S."/>
            <person name="Sudbrak R."/>
            <person name="Wen G."/>
            <person name="Jones M.C."/>
            <person name="Hurles M.E."/>
            <person name="Andrews T.D."/>
            <person name="Scott C.E."/>
            <person name="Searle S."/>
            <person name="Ramser J."/>
            <person name="Whittaker A."/>
            <person name="Deadman R."/>
            <person name="Carter N.P."/>
            <person name="Hunt S.E."/>
            <person name="Chen R."/>
            <person name="Cree A."/>
            <person name="Gunaratne P."/>
            <person name="Havlak P."/>
            <person name="Hodgson A."/>
            <person name="Metzker M.L."/>
            <person name="Richards S."/>
            <person name="Scott G."/>
            <person name="Steffen D."/>
            <person name="Sodergren E."/>
            <person name="Wheeler D.A."/>
            <person name="Worley K.C."/>
            <person name="Ainscough R."/>
            <person name="Ambrose K.D."/>
            <person name="Ansari-Lari M.A."/>
            <person name="Aradhya S."/>
            <person name="Ashwell R.I."/>
            <person name="Babbage A.K."/>
            <person name="Bagguley C.L."/>
            <person name="Ballabio A."/>
            <person name="Banerjee R."/>
            <person name="Barker G.E."/>
            <person name="Barlow K.F."/>
            <person name="Barrett I.P."/>
            <person name="Bates K.N."/>
            <person name="Beare D.M."/>
            <person name="Beasley H."/>
            <person name="Beasley O."/>
            <person name="Beck A."/>
            <person name="Bethel G."/>
            <person name="Blechschmidt K."/>
            <person name="Brady N."/>
            <person name="Bray-Allen S."/>
            <person name="Bridgeman A.M."/>
            <person name="Brown A.J."/>
            <person name="Brown M.J."/>
            <person name="Bonnin D."/>
            <person name="Bruford E.A."/>
            <person name="Buhay C."/>
            <person name="Burch P."/>
            <person name="Burford D."/>
            <person name="Burgess J."/>
            <person name="Burrill W."/>
            <person name="Burton J."/>
            <person name="Bye J.M."/>
            <person name="Carder C."/>
            <person name="Carrel L."/>
            <person name="Chako J."/>
            <person name="Chapman J.C."/>
            <person name="Chavez D."/>
            <person name="Chen E."/>
            <person name="Chen G."/>
            <person name="Chen Y."/>
            <person name="Chen Z."/>
            <person name="Chinault C."/>
            <person name="Ciccodicola A."/>
            <person name="Clark S.Y."/>
            <person name="Clarke G."/>
            <person name="Clee C.M."/>
            <person name="Clegg S."/>
            <person name="Clerc-Blankenburg K."/>
            <person name="Clifford K."/>
            <person name="Cobley V."/>
            <person name="Cole C.G."/>
            <person name="Conquer J.S."/>
            <person name="Corby N."/>
            <person name="Connor R.E."/>
            <person name="David R."/>
            <person name="Davies J."/>
            <person name="Davis C."/>
            <person name="Davis J."/>
            <person name="Delgado O."/>
            <person name="Deshazo D."/>
            <person name="Dhami P."/>
            <person name="Ding Y."/>
            <person name="Dinh H."/>
            <person name="Dodsworth S."/>
            <person name="Draper H."/>
            <person name="Dugan-Rocha S."/>
            <person name="Dunham A."/>
            <person name="Dunn M."/>
            <person name="Durbin K.J."/>
            <person name="Dutta I."/>
            <person name="Eades T."/>
            <person name="Ellwood M."/>
            <person name="Emery-Cohen A."/>
            <person name="Errington H."/>
            <person name="Evans K.L."/>
            <person name="Faulkner L."/>
            <person name="Francis F."/>
            <person name="Frankland J."/>
            <person name="Fraser A.E."/>
            <person name="Galgoczy P."/>
            <person name="Gilbert J."/>
            <person name="Gill R."/>
            <person name="Gloeckner G."/>
            <person name="Gregory S.G."/>
            <person name="Gribble S."/>
            <person name="Griffiths C."/>
            <person name="Grocock R."/>
            <person name="Gu Y."/>
            <person name="Gwilliam R."/>
            <person name="Hamilton C."/>
            <person name="Hart E.A."/>
            <person name="Hawes A."/>
            <person name="Heath P.D."/>
            <person name="Heitmann K."/>
            <person name="Hennig S."/>
            <person name="Hernandez J."/>
            <person name="Hinzmann B."/>
            <person name="Ho S."/>
            <person name="Hoffs M."/>
            <person name="Howden P.J."/>
            <person name="Huckle E.J."/>
            <person name="Hume J."/>
            <person name="Hunt P.J."/>
            <person name="Hunt A.R."/>
            <person name="Isherwood J."/>
            <person name="Jacob L."/>
            <person name="Johnson D."/>
            <person name="Jones S."/>
            <person name="de Jong P.J."/>
            <person name="Joseph S.S."/>
            <person name="Keenan S."/>
            <person name="Kelly S."/>
            <person name="Kershaw J.K."/>
            <person name="Khan Z."/>
            <person name="Kioschis P."/>
            <person name="Klages S."/>
            <person name="Knights A.J."/>
            <person name="Kosiura A."/>
            <person name="Kovar-Smith C."/>
            <person name="Laird G.K."/>
            <person name="Langford C."/>
            <person name="Lawlor S."/>
            <person name="Leversha M."/>
            <person name="Lewis L."/>
            <person name="Liu W."/>
            <person name="Lloyd C."/>
            <person name="Lloyd D.M."/>
            <person name="Loulseged H."/>
            <person name="Loveland J.E."/>
            <person name="Lovell J.D."/>
            <person name="Lozado R."/>
            <person name="Lu J."/>
            <person name="Lyne R."/>
            <person name="Ma J."/>
            <person name="Maheshwari M."/>
            <person name="Matthews L.H."/>
            <person name="McDowall J."/>
            <person name="McLaren S."/>
            <person name="McMurray A."/>
            <person name="Meidl P."/>
            <person name="Meitinger T."/>
            <person name="Milne S."/>
            <person name="Miner G."/>
            <person name="Mistry S.L."/>
            <person name="Morgan M."/>
            <person name="Morris S."/>
            <person name="Mueller I."/>
            <person name="Mullikin J.C."/>
            <person name="Nguyen N."/>
            <person name="Nordsiek G."/>
            <person name="Nyakatura G."/>
            <person name="O'dell C.N."/>
            <person name="Okwuonu G."/>
            <person name="Palmer S."/>
            <person name="Pandian R."/>
            <person name="Parker D."/>
            <person name="Parrish J."/>
            <person name="Pasternak S."/>
            <person name="Patel D."/>
            <person name="Pearce A.V."/>
            <person name="Pearson D.M."/>
            <person name="Pelan S.E."/>
            <person name="Perez L."/>
            <person name="Porter K.M."/>
            <person name="Ramsey Y."/>
            <person name="Reichwald K."/>
            <person name="Rhodes S."/>
            <person name="Ridler K.A."/>
            <person name="Schlessinger D."/>
            <person name="Schueler M.G."/>
            <person name="Sehra H.K."/>
            <person name="Shaw-Smith C."/>
            <person name="Shen H."/>
            <person name="Sheridan E.M."/>
            <person name="Shownkeen R."/>
            <person name="Skuce C.D."/>
            <person name="Smith M.L."/>
            <person name="Sotheran E.C."/>
            <person name="Steingruber H.E."/>
            <person name="Steward C.A."/>
            <person name="Storey R."/>
            <person name="Swann R.M."/>
            <person name="Swarbreck D."/>
            <person name="Tabor P.E."/>
            <person name="Taudien S."/>
            <person name="Taylor T."/>
            <person name="Teague B."/>
            <person name="Thomas K."/>
            <person name="Thorpe A."/>
            <person name="Timms K."/>
            <person name="Tracey A."/>
            <person name="Trevanion S."/>
            <person name="Tromans A.C."/>
            <person name="d'Urso M."/>
            <person name="Verduzco D."/>
            <person name="Villasana D."/>
            <person name="Waldron L."/>
            <person name="Wall M."/>
            <person name="Wang Q."/>
            <person name="Warren J."/>
            <person name="Warry G.L."/>
            <person name="Wei X."/>
            <person name="West A."/>
            <person name="Whitehead S.L."/>
            <person name="Whiteley M.N."/>
            <person name="Wilkinson J.E."/>
            <person name="Willey D.L."/>
            <person name="Williams G."/>
            <person name="Williams L."/>
            <person name="Williamson A."/>
            <person name="Williamson H."/>
            <person name="Wilming L."/>
            <person name="Woodmansey R.L."/>
            <person name="Wray P.W."/>
            <person name="Yen J."/>
            <person name="Zhang J."/>
            <person name="Zhou J."/>
            <person name="Zoghbi H."/>
            <person name="Zorilla S."/>
            <person name="Buck D."/>
            <person name="Reinhardt R."/>
            <person name="Poustka A."/>
            <person name="Rosenthal A."/>
            <person name="Lehrach H."/>
            <person name="Meindl A."/>
            <person name="Minx P.J."/>
            <person name="Hillier L.W."/>
            <person name="Willard H.F."/>
            <person name="Wilson R.K."/>
            <person name="Waterston R.H."/>
            <person name="Rice C.M."/>
            <person name="Vaudin M."/>
            <person name="Coulson A."/>
            <person name="Nelson D.L."/>
            <person name="Weinstock G."/>
            <person name="Sulston J.E."/>
            <person name="Durbin R.M."/>
            <person name="Hubbard T."/>
            <person name="Gibbs R.A."/>
            <person name="Beck S."/>
            <person name="Rogers J."/>
            <person name="Bentley D.R."/>
        </authorList>
    </citation>
    <scope>NUCLEOTIDE SEQUENCE [LARGE SCALE GENOMIC DNA]</scope>
</reference>
<reference key="4">
    <citation type="submission" date="2005-09" db="EMBL/GenBank/DDBJ databases">
        <authorList>
            <person name="Mural R.J."/>
            <person name="Istrail S."/>
            <person name="Sutton G.G."/>
            <person name="Florea L."/>
            <person name="Halpern A.L."/>
            <person name="Mobarry C.M."/>
            <person name="Lippert R."/>
            <person name="Walenz B."/>
            <person name="Shatkay H."/>
            <person name="Dew I."/>
            <person name="Miller J.R."/>
            <person name="Flanigan M.J."/>
            <person name="Edwards N.J."/>
            <person name="Bolanos R."/>
            <person name="Fasulo D."/>
            <person name="Halldorsson B.V."/>
            <person name="Hannenhalli S."/>
            <person name="Turner R."/>
            <person name="Yooseph S."/>
            <person name="Lu F."/>
            <person name="Nusskern D.R."/>
            <person name="Shue B.C."/>
            <person name="Zheng X.H."/>
            <person name="Zhong F."/>
            <person name="Delcher A.L."/>
            <person name="Huson D.H."/>
            <person name="Kravitz S.A."/>
            <person name="Mouchard L."/>
            <person name="Reinert K."/>
            <person name="Remington K.A."/>
            <person name="Clark A.G."/>
            <person name="Waterman M.S."/>
            <person name="Eichler E.E."/>
            <person name="Adams M.D."/>
            <person name="Hunkapiller M.W."/>
            <person name="Myers E.W."/>
            <person name="Venter J.C."/>
        </authorList>
    </citation>
    <scope>NUCLEOTIDE SEQUENCE [LARGE SCALE GENOMIC DNA]</scope>
</reference>
<reference key="5">
    <citation type="journal article" date="2004" name="Genome Res.">
        <title>The status, quality, and expansion of the NIH full-length cDNA project: the Mammalian Gene Collection (MGC).</title>
        <authorList>
            <consortium name="The MGC Project Team"/>
        </authorList>
    </citation>
    <scope>NUCLEOTIDE SEQUENCE [LARGE SCALE MRNA]</scope>
    <source>
        <tissue>Lung</tissue>
    </source>
</reference>
<reference key="6">
    <citation type="journal article" date="2003" name="FEBS Lett.">
        <title>Interaction of sedlin with chloride intracellular channel proteins.</title>
        <authorList>
            <person name="Fan L."/>
            <person name="Yu W."/>
            <person name="Zhu X."/>
        </authorList>
    </citation>
    <scope>INTERACTION WITH TRAPPC2</scope>
</reference>
<reference key="7">
    <citation type="journal article" date="2004" name="Int. J. Biochem. Cell Biol.">
        <title>CLIC-2 modulates cardiac ryanodine receptor Ca2+ release channels.</title>
        <authorList>
            <person name="Board P.G."/>
            <person name="Coggan M."/>
            <person name="Watson S."/>
            <person name="Gage P.W."/>
            <person name="Dulhunty A.F."/>
        </authorList>
    </citation>
    <scope>FUNCTION</scope>
    <scope>CATALYTIC ACTIVITY</scope>
    <scope>SUBUNIT</scope>
    <scope>3D-STRUCTURE MODELING</scope>
    <scope>TISSUE SPECIFICITY</scope>
    <scope>INTERACTION WITH RYR2</scope>
</reference>
<reference key="8">
    <citation type="journal article" date="2005" name="Biochem. J.">
        <title>A recently identified member of the glutathione transferase structural family modifies cardiac RyR2 substate activity, coupled gating and activation by Ca2+ and ATP.</title>
        <authorList>
            <person name="Dulhunty A.F."/>
            <person name="Pouliquin P."/>
            <person name="Coggan M."/>
            <person name="Gage P.W."/>
            <person name="Board P.G."/>
        </authorList>
    </citation>
    <scope>FUNCTION</scope>
    <scope>SUBCELLULAR LOCATION</scope>
    <scope>INTERACTION WITH RYR2</scope>
</reference>
<reference key="9">
    <citation type="journal article" date="2011" name="BMC Syst. Biol.">
        <title>Initial characterization of the human central proteome.</title>
        <authorList>
            <person name="Burkard T.R."/>
            <person name="Planyavsky M."/>
            <person name="Kaupe I."/>
            <person name="Breitwieser F.P."/>
            <person name="Buerckstuemmer T."/>
            <person name="Bennett K.L."/>
            <person name="Superti-Furga G."/>
            <person name="Colinge J."/>
        </authorList>
    </citation>
    <scope>IDENTIFICATION BY MASS SPECTROMETRY [LARGE SCALE ANALYSIS]</scope>
</reference>
<reference key="10">
    <citation type="journal article" date="2012" name="Hum. Mol. Genet.">
        <title>An X-linked channelopathy with cardiomegaly due to a CLIC2 mutation enhancing ryanodine receptor channel activity.</title>
        <authorList>
            <person name="Takano K."/>
            <person name="Liu D."/>
            <person name="Tarpey P."/>
            <person name="Gallant E."/>
            <person name="Lam A."/>
            <person name="Witham S."/>
            <person name="Alexov E."/>
            <person name="Chaubey A."/>
            <person name="Stevenson R.E."/>
            <person name="Schwartz C.E."/>
            <person name="Board P.G."/>
            <person name="Dulhunty A.F."/>
        </authorList>
    </citation>
    <scope>TISSUE SPECIFICITY</scope>
    <scope>VARIANT GLN-101</scope>
    <scope>CHARACTERIZATION OF VARIANT GLN-101</scope>
</reference>
<reference key="11">
    <citation type="journal article" date="2014" name="J. Proteomics">
        <title>An enzyme assisted RP-RPLC approach for in-depth analysis of human liver phosphoproteome.</title>
        <authorList>
            <person name="Bian Y."/>
            <person name="Song C."/>
            <person name="Cheng K."/>
            <person name="Dong M."/>
            <person name="Wang F."/>
            <person name="Huang J."/>
            <person name="Sun D."/>
            <person name="Wang L."/>
            <person name="Ye M."/>
            <person name="Zou H."/>
        </authorList>
    </citation>
    <scope>IDENTIFICATION BY MASS SPECTROMETRY [LARGE SCALE ANALYSIS]</scope>
    <source>
        <tissue>Liver</tissue>
    </source>
</reference>
<reference key="12">
    <citation type="journal article" date="2015" name="PLoS ONE">
        <title>Members of the chloride intracellular ion channel protein family demonstrate glutaredoxin-like enzymatic activity.</title>
        <authorList>
            <person name="Al Khamici H."/>
            <person name="Brown L.J."/>
            <person name="Hossain K.R."/>
            <person name="Hudson A.L."/>
            <person name="Sinclair-Burton A.A."/>
            <person name="Ng J.P."/>
            <person name="Daniel E.L."/>
            <person name="Hare J.E."/>
            <person name="Cornell B.A."/>
            <person name="Curmi P.M."/>
            <person name="Davey M.W."/>
            <person name="Valenzuela S.M."/>
        </authorList>
    </citation>
    <scope>FUNCTION</scope>
    <scope>DOMAIN</scope>
</reference>
<reference key="13">
    <citation type="journal article" date="2007" name="J. Mol. Biol.">
        <title>Structure of the Janus protein human CLIC2.</title>
        <authorList>
            <person name="Cromer B.A."/>
            <person name="Gorman M.A."/>
            <person name="Hansen G."/>
            <person name="Adams J.J."/>
            <person name="Coggan M."/>
            <person name="Littler D.R."/>
            <person name="Brown L.J."/>
            <person name="Mazzanti M."/>
            <person name="Breit S.N."/>
            <person name="Curmi P.M.G."/>
            <person name="Dulhunty A.F."/>
            <person name="Board P.G."/>
            <person name="Parker M.W."/>
        </authorList>
    </citation>
    <scope>X-RAY CRYSTALLOGRAPHY (1.85 ANGSTROMS) IN COMPLEX WITH GLUTATHIONE</scope>
    <scope>TRANSPORTER ACTIVITY</scope>
    <scope>SUBUNIT</scope>
    <scope>FUNCTION</scope>
    <scope>PH DEPENDENCE</scope>
    <scope>DISULFIDE BOND</scope>
</reference>
<reference key="14">
    <citation type="journal article" date="2008" name="Proteins">
        <title>The crystal structure of human chloride intracellular channel protein 2: a disulfide bond with functional implications.</title>
        <authorList>
            <person name="Mi W."/>
            <person name="Liang Y.-H."/>
            <person name="Li L."/>
            <person name="Su X.-D."/>
        </authorList>
    </citation>
    <scope>X-RAY CRYSTALLOGRAPHY (2.0 ANGSTROMS)</scope>
    <scope>DISULFIDE BOND</scope>
</reference>
<proteinExistence type="evidence at protein level"/>
<comment type="function">
    <text evidence="5 6 7 10 13">In the soluble state, catalyzes glutaredoxin-like thiol disulfide exchange reactions with reduced glutathione as electron donor. Displays weak glutathione peroxidase activity (Probable) (PubMed:25581026). Can insert into membranes and form chloride ion channels. Membrane insertion seems to be redox-regulated and may occur only under oxidizing conditions. Modulates the activity of RYR2 and inhibits calcium influx.</text>
</comment>
<comment type="catalytic activity">
    <reaction evidence="7">
        <text>chloride(in) = chloride(out)</text>
        <dbReference type="Rhea" id="RHEA:29823"/>
        <dbReference type="ChEBI" id="CHEBI:17996"/>
    </reaction>
</comment>
<comment type="catalytic activity">
    <reaction evidence="13">
        <text>tert-butyl hydroperoxide + 2 glutathione = tert-butanol + glutathione disulfide + H2O</text>
        <dbReference type="Rhea" id="RHEA:69412"/>
        <dbReference type="ChEBI" id="CHEBI:15377"/>
        <dbReference type="ChEBI" id="CHEBI:45895"/>
        <dbReference type="ChEBI" id="CHEBI:57925"/>
        <dbReference type="ChEBI" id="CHEBI:58297"/>
        <dbReference type="ChEBI" id="CHEBI:64090"/>
    </reaction>
    <physiologicalReaction direction="left-to-right" evidence="13">
        <dbReference type="Rhea" id="RHEA:69413"/>
    </physiologicalReaction>
</comment>
<comment type="catalytic activity">
    <reaction evidence="13">
        <text>cumene hydroperoxide + 2 glutathione = 2-phenylpropan-2-ol + glutathione disulfide + H2O</text>
        <dbReference type="Rhea" id="RHEA:69651"/>
        <dbReference type="ChEBI" id="CHEBI:15377"/>
        <dbReference type="ChEBI" id="CHEBI:57925"/>
        <dbReference type="ChEBI" id="CHEBI:58297"/>
        <dbReference type="ChEBI" id="CHEBI:78673"/>
        <dbReference type="ChEBI" id="CHEBI:131607"/>
    </reaction>
    <physiologicalReaction direction="left-to-right" evidence="13">
        <dbReference type="Rhea" id="RHEA:69652"/>
    </physiologicalReaction>
</comment>
<comment type="activity regulation">
    <text evidence="7">The channel conductance is regulated by pH.</text>
</comment>
<comment type="subunit">
    <text evidence="4 5 6 7">Monomer. Interacts with TRAPPC2 and RYR2.</text>
</comment>
<comment type="interaction">
    <interactant intactId="EBI-6286019">
        <id>O15247</id>
    </interactant>
    <interactant intactId="EBI-11978969">
        <id>Q4KMQ1-2</id>
        <label>TPRN</label>
    </interactant>
    <organismsDiffer>false</organismsDiffer>
    <experiments>3</experiments>
</comment>
<comment type="subcellular location">
    <subcellularLocation>
        <location evidence="6">Cytoplasm</location>
    </subcellularLocation>
    <subcellularLocation>
        <location evidence="14">Membrane</location>
        <topology evidence="14">Single-pass membrane protein</topology>
    </subcellularLocation>
    <text>Exists both as soluble cytoplasmic protein and as membrane protein with probably a single transmembrane domain.</text>
</comment>
<comment type="tissue specificity">
    <text evidence="5 9">Expressed in adult and fetal brain, heart, skeletal muscle, liver, lung, and spleen. Detected in adult stomach and testis. Expressed in fetal thymus and kidney.</text>
</comment>
<comment type="domain">
    <text evidence="15">Members of this family may change from a globular, soluble state to a state where the N-terminal domain is inserted into the membrane and functions as a chloride channel. The redox status of the active cysteine in Cys-X-X-Cys motif likely determines the capacity to adopt a soluble or membrane-inserted state. A conformation change of the N-terminal domain is thought to expose hydrophobic surfaces that trigger membrane insertion.</text>
</comment>
<comment type="domain">
    <text evidence="15">The active G-site has a dithiol Cys-X-X-Cys motif which mediates glutathione-dependent redox catalysis.</text>
</comment>
<comment type="similarity">
    <text evidence="12">Belongs to the chloride channel CLIC family.</text>
</comment>
<comment type="sequence caution" evidence="12">
    <conflict type="frameshift">
        <sequence resource="EMBL-CDS" id="CAA73228"/>
    </conflict>
</comment>
<protein>
    <recommendedName>
        <fullName>Chloride intracellular channel protein 2</fullName>
    </recommendedName>
    <alternativeName>
        <fullName evidence="15">Glutaredoxin-like oxidoreductase CLIC2</fullName>
        <ecNumber evidence="10">1.8.-.-</ecNumber>
    </alternativeName>
    <alternativeName>
        <fullName evidence="13">Glutaredoxin-like peroxidase CLIC2</fullName>
        <ecNumber evidence="13">1.11.1.-</ecNumber>
    </alternativeName>
    <alternativeName>
        <fullName>XAP121</fullName>
    </alternativeName>
</protein>
<organism>
    <name type="scientific">Homo sapiens</name>
    <name type="common">Human</name>
    <dbReference type="NCBI Taxonomy" id="9606"/>
    <lineage>
        <taxon>Eukaryota</taxon>
        <taxon>Metazoa</taxon>
        <taxon>Chordata</taxon>
        <taxon>Craniata</taxon>
        <taxon>Vertebrata</taxon>
        <taxon>Euteleostomi</taxon>
        <taxon>Mammalia</taxon>
        <taxon>Eutheria</taxon>
        <taxon>Euarchontoglires</taxon>
        <taxon>Primates</taxon>
        <taxon>Haplorrhini</taxon>
        <taxon>Catarrhini</taxon>
        <taxon>Hominidae</taxon>
        <taxon>Homo</taxon>
    </lineage>
</organism>
<accession>O15247</accession>
<accession>A8K9S0</accession>
<accession>O15174</accession>
<accession>Q5JT80</accession>
<accession>Q8TCE3</accession>
<keyword id="KW-0002">3D-structure</keyword>
<keyword id="KW-0868">Chloride</keyword>
<keyword id="KW-0869">Chloride channel</keyword>
<keyword id="KW-0963">Cytoplasm</keyword>
<keyword id="KW-1015">Disulfide bond</keyword>
<keyword id="KW-0407">Ion channel</keyword>
<keyword id="KW-0406">Ion transport</keyword>
<keyword id="KW-0472">Membrane</keyword>
<keyword id="KW-0560">Oxidoreductase</keyword>
<keyword id="KW-1267">Proteomics identification</keyword>
<keyword id="KW-1185">Reference proteome</keyword>
<keyword id="KW-0812">Transmembrane</keyword>
<keyword id="KW-1133">Transmembrane helix</keyword>
<keyword id="KW-0813">Transport</keyword>
<keyword id="KW-0851">Voltage-gated channel</keyword>
<feature type="chain" id="PRO_0000144205" description="Chloride intracellular channel protein 2">
    <location>
        <begin position="1"/>
        <end position="247"/>
    </location>
</feature>
<feature type="transmembrane region" description="Helical; Note=After insertion into the membrane" evidence="2">
    <location>
        <begin position="32"/>
        <end position="52"/>
    </location>
</feature>
<feature type="domain" description="GST C-terminal" evidence="3">
    <location>
        <begin position="76"/>
        <end position="239"/>
    </location>
</feature>
<feature type="region of interest" description="Required for insertion into the membrane" evidence="1">
    <location>
        <begin position="1"/>
        <end position="96"/>
    </location>
</feature>
<feature type="region of interest" description="N-terminal">
    <location>
        <begin position="1"/>
        <end position="94"/>
    </location>
</feature>
<feature type="region of interest" description="Joint loop">
    <location>
        <begin position="95"/>
        <end position="106"/>
    </location>
</feature>
<feature type="region of interest" description="C-terminal">
    <location>
        <begin position="107"/>
        <end position="247"/>
    </location>
</feature>
<feature type="region of interest" description="Foot loop">
    <location>
        <begin position="151"/>
        <end position="171"/>
    </location>
</feature>
<feature type="short sequence motif" description="G-site" evidence="15">
    <location>
        <begin position="30"/>
        <end position="33"/>
    </location>
</feature>
<feature type="binding site" evidence="7 17">
    <location>
        <position position="25"/>
    </location>
    <ligand>
        <name>glutathione</name>
        <dbReference type="ChEBI" id="CHEBI:57925"/>
    </ligand>
</feature>
<feature type="binding site" evidence="7 17">
    <location>
        <position position="227"/>
    </location>
    <ligand>
        <name>glutathione</name>
        <dbReference type="ChEBI" id="CHEBI:57925"/>
    </ligand>
</feature>
<feature type="disulfide bond" description="In soluble form" evidence="7 8">
    <location>
        <begin position="30"/>
        <end position="33"/>
    </location>
</feature>
<feature type="sequence variant" id="VAR_068898" description="Found in a patient with syndromic intellectual disability; uncertain significance; results in stimulation of RYR channels activity with channels remaining open for longer times; the mutation may impair insertion of the protein into the membrane to form a functioning ion channel; dbSNP:rs398122917." evidence="9">
    <original>H</original>
    <variation>Q</variation>
    <location>
        <position position="101"/>
    </location>
</feature>
<feature type="sequence conflict" description="In Ref. 1; CAA03948." evidence="12" ref="1">
    <original>S</original>
    <variation>C</variation>
    <location>
        <position position="109"/>
    </location>
</feature>
<feature type="sequence conflict" description="In Ref. 1; CAA73228." evidence="12" ref="1">
    <original>E</original>
    <variation>G</variation>
    <location>
        <position position="164"/>
    </location>
</feature>
<feature type="strand" evidence="18">
    <location>
        <begin position="14"/>
        <end position="20"/>
    </location>
</feature>
<feature type="strand" evidence="18">
    <location>
        <begin position="24"/>
        <end position="27"/>
    </location>
</feature>
<feature type="helix" evidence="18">
    <location>
        <begin position="31"/>
        <end position="43"/>
    </location>
</feature>
<feature type="strand" evidence="18">
    <location>
        <begin position="48"/>
        <end position="52"/>
    </location>
</feature>
<feature type="helix" evidence="19">
    <location>
        <begin position="57"/>
        <end position="60"/>
    </location>
</feature>
<feature type="strand" evidence="18">
    <location>
        <begin position="68"/>
        <end position="70"/>
    </location>
</feature>
<feature type="strand" evidence="18">
    <location>
        <begin position="72"/>
        <end position="75"/>
    </location>
</feature>
<feature type="strand" evidence="18">
    <location>
        <begin position="78"/>
        <end position="80"/>
    </location>
</feature>
<feature type="helix" evidence="18">
    <location>
        <begin position="83"/>
        <end position="93"/>
    </location>
</feature>
<feature type="turn" evidence="18">
    <location>
        <begin position="96"/>
        <end position="98"/>
    </location>
</feature>
<feature type="helix" evidence="18">
    <location>
        <begin position="108"/>
        <end position="111"/>
    </location>
</feature>
<feature type="turn" evidence="18">
    <location>
        <begin position="112"/>
        <end position="115"/>
    </location>
</feature>
<feature type="helix" evidence="18">
    <location>
        <begin position="116"/>
        <end position="125"/>
    </location>
</feature>
<feature type="helix" evidence="18">
    <location>
        <begin position="129"/>
        <end position="131"/>
    </location>
</feature>
<feature type="helix" evidence="18">
    <location>
        <begin position="132"/>
        <end position="151"/>
    </location>
</feature>
<feature type="turn" evidence="18">
    <location>
        <begin position="160"/>
        <end position="162"/>
    </location>
</feature>
<feature type="strand" evidence="19">
    <location>
        <begin position="163"/>
        <end position="165"/>
    </location>
</feature>
<feature type="strand" evidence="18">
    <location>
        <begin position="172"/>
        <end position="178"/>
    </location>
</feature>
<feature type="helix" evidence="18">
    <location>
        <begin position="181"/>
        <end position="201"/>
    </location>
</feature>
<feature type="helix" evidence="18">
    <location>
        <begin position="210"/>
        <end position="220"/>
    </location>
</feature>
<feature type="helix" evidence="18">
    <location>
        <begin position="223"/>
        <end position="226"/>
    </location>
</feature>
<feature type="helix" evidence="18">
    <location>
        <begin position="232"/>
        <end position="239"/>
    </location>
</feature>
<feature type="turn" evidence="18">
    <location>
        <begin position="240"/>
        <end position="242"/>
    </location>
</feature>
<dbReference type="EC" id="1.8.-.-" evidence="10"/>
<dbReference type="EC" id="1.11.1.-" evidence="13"/>
<dbReference type="EMBL" id="Y12696">
    <property type="protein sequence ID" value="CAA73228.1"/>
    <property type="status" value="ALT_FRAME"/>
    <property type="molecule type" value="mRNA"/>
</dbReference>
<dbReference type="EMBL" id="AJ000217">
    <property type="protein sequence ID" value="CAA03948.1"/>
    <property type="molecule type" value="Genomic_DNA"/>
</dbReference>
<dbReference type="EMBL" id="AJ000218">
    <property type="protein sequence ID" value="CAA03948.1"/>
    <property type="status" value="JOINED"/>
    <property type="molecule type" value="Genomic_DNA"/>
</dbReference>
<dbReference type="EMBL" id="AJ000219">
    <property type="protein sequence ID" value="CAA03948.1"/>
    <property type="status" value="JOINED"/>
    <property type="molecule type" value="Genomic_DNA"/>
</dbReference>
<dbReference type="EMBL" id="AK292785">
    <property type="protein sequence ID" value="BAF85474.1"/>
    <property type="molecule type" value="mRNA"/>
</dbReference>
<dbReference type="EMBL" id="AL356738">
    <property type="protein sequence ID" value="CAI41464.1"/>
    <property type="molecule type" value="Genomic_DNA"/>
</dbReference>
<dbReference type="EMBL" id="CH471172">
    <property type="protein sequence ID" value="EAW72624.1"/>
    <property type="molecule type" value="Genomic_DNA"/>
</dbReference>
<dbReference type="EMBL" id="BC022305">
    <property type="protein sequence ID" value="AAH22305.1"/>
    <property type="molecule type" value="mRNA"/>
</dbReference>
<dbReference type="CCDS" id="CCDS14767.1"/>
<dbReference type="RefSeq" id="NP_001280.3">
    <property type="nucleotide sequence ID" value="NM_001289.5"/>
</dbReference>
<dbReference type="PDB" id="2PER">
    <property type="method" value="X-ray"/>
    <property type="resolution" value="2.00 A"/>
    <property type="chains" value="A=1-247"/>
</dbReference>
<dbReference type="PDB" id="2R4V">
    <property type="method" value="X-ray"/>
    <property type="resolution" value="1.85 A"/>
    <property type="chains" value="A=1-247"/>
</dbReference>
<dbReference type="PDB" id="2R5G">
    <property type="method" value="X-ray"/>
    <property type="resolution" value="1.86 A"/>
    <property type="chains" value="A=1-247"/>
</dbReference>
<dbReference type="PDBsum" id="2PER"/>
<dbReference type="PDBsum" id="2R4V"/>
<dbReference type="PDBsum" id="2R5G"/>
<dbReference type="SMR" id="O15247"/>
<dbReference type="BioGRID" id="107605">
    <property type="interactions" value="21"/>
</dbReference>
<dbReference type="FunCoup" id="O15247">
    <property type="interactions" value="1714"/>
</dbReference>
<dbReference type="IntAct" id="O15247">
    <property type="interactions" value="11"/>
</dbReference>
<dbReference type="STRING" id="9606.ENSP00000358460"/>
<dbReference type="TCDB" id="1.A.12.1.5">
    <property type="family name" value="the intracellular chloride channel (clic) family"/>
</dbReference>
<dbReference type="GlyGen" id="O15247">
    <property type="glycosylation" value="1 site, 1 O-linked glycan (1 site)"/>
</dbReference>
<dbReference type="iPTMnet" id="O15247"/>
<dbReference type="PhosphoSitePlus" id="O15247"/>
<dbReference type="BioMuta" id="CLIC2"/>
<dbReference type="jPOST" id="O15247"/>
<dbReference type="MassIVE" id="O15247"/>
<dbReference type="PaxDb" id="9606-ENSP00000358460"/>
<dbReference type="PeptideAtlas" id="O15247"/>
<dbReference type="ProteomicsDB" id="48540"/>
<dbReference type="Pumba" id="O15247"/>
<dbReference type="Antibodypedia" id="17894">
    <property type="antibodies" value="151 antibodies from 25 providers"/>
</dbReference>
<dbReference type="DNASU" id="1193"/>
<dbReference type="Ensembl" id="ENST00000369449.7">
    <property type="protein sequence ID" value="ENSP00000358460.2"/>
    <property type="gene ID" value="ENSG00000155962.13"/>
</dbReference>
<dbReference type="GeneID" id="1193"/>
<dbReference type="KEGG" id="hsa:1193"/>
<dbReference type="MANE-Select" id="ENST00000369449.7">
    <property type="protein sequence ID" value="ENSP00000358460.2"/>
    <property type="RefSeq nucleotide sequence ID" value="NM_001289.6"/>
    <property type="RefSeq protein sequence ID" value="NP_001280.3"/>
</dbReference>
<dbReference type="UCSC" id="uc004fnf.5">
    <property type="organism name" value="human"/>
</dbReference>
<dbReference type="AGR" id="HGNC:2063"/>
<dbReference type="CTD" id="1193"/>
<dbReference type="DisGeNET" id="1193"/>
<dbReference type="GeneCards" id="CLIC2"/>
<dbReference type="GeneReviews" id="CLIC2"/>
<dbReference type="HGNC" id="HGNC:2063">
    <property type="gene designation" value="CLIC2"/>
</dbReference>
<dbReference type="HPA" id="ENSG00000155962">
    <property type="expression patterns" value="Low tissue specificity"/>
</dbReference>
<dbReference type="MalaCards" id="CLIC2"/>
<dbReference type="MIM" id="300138">
    <property type="type" value="gene"/>
</dbReference>
<dbReference type="neXtProt" id="NX_O15247"/>
<dbReference type="OpenTargets" id="ENSG00000155962"/>
<dbReference type="Orphanet" id="324410">
    <property type="disease" value="X-linked intellectual disability-cardiomegaly-congestive heart failure syndrome"/>
</dbReference>
<dbReference type="PharmGKB" id="PA26589"/>
<dbReference type="VEuPathDB" id="HostDB:ENSG00000155962"/>
<dbReference type="eggNOG" id="KOG1422">
    <property type="taxonomic scope" value="Eukaryota"/>
</dbReference>
<dbReference type="GeneTree" id="ENSGT00940000161397"/>
<dbReference type="HOGENOM" id="CLU_061051_1_0_1"/>
<dbReference type="InParanoid" id="O15247"/>
<dbReference type="OMA" id="CAEDILV"/>
<dbReference type="OrthoDB" id="1935530at2759"/>
<dbReference type="PAN-GO" id="O15247">
    <property type="GO annotations" value="4 GO annotations based on evolutionary models"/>
</dbReference>
<dbReference type="PhylomeDB" id="O15247"/>
<dbReference type="TreeFam" id="TF315438"/>
<dbReference type="PathwayCommons" id="O15247"/>
<dbReference type="Reactome" id="R-HSA-2672351">
    <property type="pathway name" value="Stimuli-sensing channels"/>
</dbReference>
<dbReference type="Reactome" id="R-HSA-5578775">
    <property type="pathway name" value="Ion homeostasis"/>
</dbReference>
<dbReference type="SignaLink" id="O15247"/>
<dbReference type="SIGNOR" id="O15247"/>
<dbReference type="BioGRID-ORCS" id="1193">
    <property type="hits" value="10 hits in 781 CRISPR screens"/>
</dbReference>
<dbReference type="CD-CODE" id="91857CE7">
    <property type="entry name" value="Nucleolus"/>
</dbReference>
<dbReference type="ChiTaRS" id="CLIC2">
    <property type="organism name" value="human"/>
</dbReference>
<dbReference type="EvolutionaryTrace" id="O15247"/>
<dbReference type="GeneWiki" id="CLIC2"/>
<dbReference type="GenomeRNAi" id="1193"/>
<dbReference type="Pharos" id="O15247">
    <property type="development level" value="Tbio"/>
</dbReference>
<dbReference type="PRO" id="PR:O15247"/>
<dbReference type="Proteomes" id="UP000005640">
    <property type="component" value="Chromosome X"/>
</dbReference>
<dbReference type="RNAct" id="O15247">
    <property type="molecule type" value="protein"/>
</dbReference>
<dbReference type="Bgee" id="ENSG00000155962">
    <property type="expression patterns" value="Expressed in calcaneal tendon and 156 other cell types or tissues"/>
</dbReference>
<dbReference type="ExpressionAtlas" id="O15247">
    <property type="expression patterns" value="baseline and differential"/>
</dbReference>
<dbReference type="GO" id="GO:0034707">
    <property type="term" value="C:chloride channel complex"/>
    <property type="evidence" value="ECO:0007669"/>
    <property type="project" value="UniProtKB-KW"/>
</dbReference>
<dbReference type="GO" id="GO:0005737">
    <property type="term" value="C:cytoplasm"/>
    <property type="evidence" value="ECO:0000314"/>
    <property type="project" value="BHF-UCL"/>
</dbReference>
<dbReference type="GO" id="GO:0005829">
    <property type="term" value="C:cytosol"/>
    <property type="evidence" value="ECO:0000314"/>
    <property type="project" value="HPA"/>
</dbReference>
<dbReference type="GO" id="GO:0016020">
    <property type="term" value="C:membrane"/>
    <property type="evidence" value="ECO:0000318"/>
    <property type="project" value="GO_Central"/>
</dbReference>
<dbReference type="GO" id="GO:0005654">
    <property type="term" value="C:nucleoplasm"/>
    <property type="evidence" value="ECO:0000314"/>
    <property type="project" value="HPA"/>
</dbReference>
<dbReference type="GO" id="GO:0005634">
    <property type="term" value="C:nucleus"/>
    <property type="evidence" value="ECO:0000304"/>
    <property type="project" value="UniProtKB"/>
</dbReference>
<dbReference type="GO" id="GO:0005886">
    <property type="term" value="C:plasma membrane"/>
    <property type="evidence" value="ECO:0000314"/>
    <property type="project" value="HPA"/>
</dbReference>
<dbReference type="GO" id="GO:0005254">
    <property type="term" value="F:chloride channel activity"/>
    <property type="evidence" value="ECO:0000318"/>
    <property type="project" value="GO_Central"/>
</dbReference>
<dbReference type="GO" id="GO:0004602">
    <property type="term" value="F:glutathione peroxidase activity"/>
    <property type="evidence" value="ECO:0000314"/>
    <property type="project" value="BHF-UCL"/>
</dbReference>
<dbReference type="GO" id="GO:0006821">
    <property type="term" value="P:chloride transport"/>
    <property type="evidence" value="ECO:0000318"/>
    <property type="project" value="GO_Central"/>
</dbReference>
<dbReference type="GO" id="GO:0010881">
    <property type="term" value="P:regulation of cardiac muscle contraction by regulation of the release of sequestered calcium ion"/>
    <property type="evidence" value="ECO:0000314"/>
    <property type="project" value="BHF-UCL"/>
</dbReference>
<dbReference type="GO" id="GO:0010880">
    <property type="term" value="P:regulation of release of sequestered calcium ion into cytosol by sarcoplasmic reticulum"/>
    <property type="evidence" value="ECO:0000314"/>
    <property type="project" value="BHF-UCL"/>
</dbReference>
<dbReference type="GO" id="GO:0007165">
    <property type="term" value="P:signal transduction"/>
    <property type="evidence" value="ECO:0000304"/>
    <property type="project" value="UniProtKB"/>
</dbReference>
<dbReference type="CDD" id="cd10298">
    <property type="entry name" value="GST_C_CLIC2"/>
    <property type="match status" value="1"/>
</dbReference>
<dbReference type="CDD" id="cd03061">
    <property type="entry name" value="GST_N_CLIC"/>
    <property type="match status" value="1"/>
</dbReference>
<dbReference type="FunFam" id="1.20.1050.10:FF:000001">
    <property type="entry name" value="Chloride intracellular channel 2"/>
    <property type="match status" value="1"/>
</dbReference>
<dbReference type="FunFam" id="3.40.30.10:FF:000069">
    <property type="entry name" value="Chloride intracellular channel 2"/>
    <property type="match status" value="1"/>
</dbReference>
<dbReference type="Gene3D" id="1.20.1050.10">
    <property type="match status" value="1"/>
</dbReference>
<dbReference type="Gene3D" id="3.40.30.10">
    <property type="entry name" value="Glutaredoxin"/>
    <property type="match status" value="1"/>
</dbReference>
<dbReference type="InterPro" id="IPR002946">
    <property type="entry name" value="CLIC"/>
</dbReference>
<dbReference type="InterPro" id="IPR053823">
    <property type="entry name" value="CLIC_N"/>
</dbReference>
<dbReference type="InterPro" id="IPR010987">
    <property type="entry name" value="Glutathione-S-Trfase_C-like"/>
</dbReference>
<dbReference type="InterPro" id="IPR036282">
    <property type="entry name" value="Glutathione-S-Trfase_C_sf"/>
</dbReference>
<dbReference type="InterPro" id="IPR040079">
    <property type="entry name" value="Glutathione_S-Trfase"/>
</dbReference>
<dbReference type="InterPro" id="IPR030253">
    <property type="entry name" value="GST_C_CLIC-2"/>
</dbReference>
<dbReference type="InterPro" id="IPR036249">
    <property type="entry name" value="Thioredoxin-like_sf"/>
</dbReference>
<dbReference type="NCBIfam" id="TIGR00862">
    <property type="entry name" value="O-ClC"/>
    <property type="match status" value="1"/>
</dbReference>
<dbReference type="PANTHER" id="PTHR45476:SF3">
    <property type="entry name" value="CHLORIDE INTRACELLULAR CHANNEL PROTEIN"/>
    <property type="match status" value="1"/>
</dbReference>
<dbReference type="PANTHER" id="PTHR45476">
    <property type="entry name" value="CHLORIDE INTRACELLULAR CHANNEL PROTEIN 6-RELATED"/>
    <property type="match status" value="1"/>
</dbReference>
<dbReference type="Pfam" id="PF22441">
    <property type="entry name" value="CLIC-like_N"/>
    <property type="match status" value="1"/>
</dbReference>
<dbReference type="Pfam" id="PF13410">
    <property type="entry name" value="GST_C_2"/>
    <property type="match status" value="1"/>
</dbReference>
<dbReference type="PRINTS" id="PR01263">
    <property type="entry name" value="INTCLCHANNEL"/>
</dbReference>
<dbReference type="SFLD" id="SFLDS00019">
    <property type="entry name" value="Glutathione_Transferase_(cytos"/>
    <property type="match status" value="1"/>
</dbReference>
<dbReference type="SUPFAM" id="SSF47616">
    <property type="entry name" value="GST C-terminal domain-like"/>
    <property type="match status" value="1"/>
</dbReference>
<dbReference type="SUPFAM" id="SSF52833">
    <property type="entry name" value="Thioredoxin-like"/>
    <property type="match status" value="1"/>
</dbReference>
<dbReference type="PROSITE" id="PS50405">
    <property type="entry name" value="GST_CTER"/>
    <property type="match status" value="1"/>
</dbReference>
<gene>
    <name evidence="11 16" type="primary">CLIC2</name>
</gene>
<name>CLIC2_HUMAN</name>
<evidence type="ECO:0000250" key="1"/>
<evidence type="ECO:0000255" key="2"/>
<evidence type="ECO:0000255" key="3">
    <source>
        <dbReference type="PROSITE-ProRule" id="PRU00685"/>
    </source>
</evidence>
<evidence type="ECO:0000269" key="4">
    <source>
    </source>
</evidence>
<evidence type="ECO:0000269" key="5">
    <source>
    </source>
</evidence>
<evidence type="ECO:0000269" key="6">
    <source>
    </source>
</evidence>
<evidence type="ECO:0000269" key="7">
    <source>
    </source>
</evidence>
<evidence type="ECO:0000269" key="8">
    <source>
    </source>
</evidence>
<evidence type="ECO:0000269" key="9">
    <source>
    </source>
</evidence>
<evidence type="ECO:0000269" key="10">
    <source>
    </source>
</evidence>
<evidence type="ECO:0000303" key="11">
    <source>
    </source>
</evidence>
<evidence type="ECO:0000305" key="12"/>
<evidence type="ECO:0000305" key="13">
    <source>
    </source>
</evidence>
<evidence type="ECO:0000305" key="14">
    <source>
    </source>
</evidence>
<evidence type="ECO:0000305" key="15">
    <source>
    </source>
</evidence>
<evidence type="ECO:0000312" key="16">
    <source>
        <dbReference type="HGNC" id="HGNC:2063"/>
    </source>
</evidence>
<evidence type="ECO:0007744" key="17">
    <source>
        <dbReference type="PDB" id="2R4V"/>
    </source>
</evidence>
<evidence type="ECO:0007829" key="18">
    <source>
        <dbReference type="PDB" id="2R4V"/>
    </source>
</evidence>
<evidence type="ECO:0007829" key="19">
    <source>
        <dbReference type="PDB" id="2R5G"/>
    </source>
</evidence>
<sequence>MSGLRPGTQVDPEIELFVKAGSDGESIGNCPFCQRLFMILWLKGVKFNVTTVDMTRKPEELKDLAPGTNPPFLVYNKELKTDFIKIEEFLEQTLAPPRYPHLSPKYKESFDVGCNLFAKFSAYIKNTQKEANKNFEKSLLKEFKRLDDYLNTPLLDEIDPDSAEEPPVSRRLFLDGDQLTLADCSLLPKLNIIKVAAKKYRDFDIPAEFSGVWRYLHNAYAREEFTHTCPEDKEIENTYANVAKQKS</sequence>